<reference key="1">
    <citation type="journal article" date="2011" name="MBio">
        <title>Novel metabolic attributes of the genus Cyanothece, comprising a group of unicellular nitrogen-fixing Cyanobacteria.</title>
        <authorList>
            <person name="Bandyopadhyay A."/>
            <person name="Elvitigala T."/>
            <person name="Welsh E."/>
            <person name="Stockel J."/>
            <person name="Liberton M."/>
            <person name="Min H."/>
            <person name="Sherman L.A."/>
            <person name="Pakrasi H.B."/>
        </authorList>
    </citation>
    <scope>NUCLEOTIDE SEQUENCE [LARGE SCALE GENOMIC DNA]</scope>
    <source>
        <strain>PCC 7424</strain>
    </source>
</reference>
<comment type="function">
    <text evidence="1">Aspartyl-tRNA synthetase with relaxed tRNA specificity since it is able to aspartylate not only its cognate tRNA(Asp) but also tRNA(Asn). Reaction proceeds in two steps: L-aspartate is first activated by ATP to form Asp-AMP and then transferred to the acceptor end of tRNA(Asp/Asn).</text>
</comment>
<comment type="catalytic activity">
    <reaction evidence="1">
        <text>tRNA(Asx) + L-aspartate + ATP = L-aspartyl-tRNA(Asx) + AMP + diphosphate</text>
        <dbReference type="Rhea" id="RHEA:18349"/>
        <dbReference type="Rhea" id="RHEA-COMP:9710"/>
        <dbReference type="Rhea" id="RHEA-COMP:9711"/>
        <dbReference type="ChEBI" id="CHEBI:29991"/>
        <dbReference type="ChEBI" id="CHEBI:30616"/>
        <dbReference type="ChEBI" id="CHEBI:33019"/>
        <dbReference type="ChEBI" id="CHEBI:78442"/>
        <dbReference type="ChEBI" id="CHEBI:78516"/>
        <dbReference type="ChEBI" id="CHEBI:456215"/>
        <dbReference type="EC" id="6.1.1.23"/>
    </reaction>
</comment>
<comment type="subunit">
    <text evidence="1">Homodimer.</text>
</comment>
<comment type="subcellular location">
    <subcellularLocation>
        <location evidence="1">Cytoplasm</location>
    </subcellularLocation>
</comment>
<comment type="similarity">
    <text evidence="1">Belongs to the class-II aminoacyl-tRNA synthetase family. Type 1 subfamily.</text>
</comment>
<gene>
    <name evidence="1" type="primary">aspS</name>
    <name type="ordered locus">PCC7424_3043</name>
</gene>
<keyword id="KW-0030">Aminoacyl-tRNA synthetase</keyword>
<keyword id="KW-0067">ATP-binding</keyword>
<keyword id="KW-0963">Cytoplasm</keyword>
<keyword id="KW-0436">Ligase</keyword>
<keyword id="KW-0547">Nucleotide-binding</keyword>
<keyword id="KW-0648">Protein biosynthesis</keyword>
<keyword id="KW-1185">Reference proteome</keyword>
<accession>B7KB89</accession>
<evidence type="ECO:0000255" key="1">
    <source>
        <dbReference type="HAMAP-Rule" id="MF_00044"/>
    </source>
</evidence>
<protein>
    <recommendedName>
        <fullName evidence="1">Aspartate--tRNA(Asp/Asn) ligase</fullName>
        <ecNumber evidence="1">6.1.1.23</ecNumber>
    </recommendedName>
    <alternativeName>
        <fullName evidence="1">Aspartyl-tRNA synthetase</fullName>
        <shortName evidence="1">AspRS</shortName>
    </alternativeName>
    <alternativeName>
        <fullName evidence="1">Non-discriminating aspartyl-tRNA synthetase</fullName>
        <shortName evidence="1">ND-AspRS</shortName>
    </alternativeName>
</protein>
<proteinExistence type="inferred from homology"/>
<dbReference type="EC" id="6.1.1.23" evidence="1"/>
<dbReference type="EMBL" id="CP001291">
    <property type="protein sequence ID" value="ACK71445.1"/>
    <property type="molecule type" value="Genomic_DNA"/>
</dbReference>
<dbReference type="RefSeq" id="WP_015955042.1">
    <property type="nucleotide sequence ID" value="NC_011729.1"/>
</dbReference>
<dbReference type="SMR" id="B7KB89"/>
<dbReference type="STRING" id="65393.PCC7424_3043"/>
<dbReference type="KEGG" id="cyc:PCC7424_3043"/>
<dbReference type="eggNOG" id="COG0173">
    <property type="taxonomic scope" value="Bacteria"/>
</dbReference>
<dbReference type="HOGENOM" id="CLU_014330_3_2_3"/>
<dbReference type="OrthoDB" id="9802326at2"/>
<dbReference type="Proteomes" id="UP000002384">
    <property type="component" value="Chromosome"/>
</dbReference>
<dbReference type="GO" id="GO:0005737">
    <property type="term" value="C:cytoplasm"/>
    <property type="evidence" value="ECO:0007669"/>
    <property type="project" value="UniProtKB-SubCell"/>
</dbReference>
<dbReference type="GO" id="GO:0004815">
    <property type="term" value="F:aspartate-tRNA ligase activity"/>
    <property type="evidence" value="ECO:0007669"/>
    <property type="project" value="UniProtKB-UniRule"/>
</dbReference>
<dbReference type="GO" id="GO:0050560">
    <property type="term" value="F:aspartate-tRNA(Asn) ligase activity"/>
    <property type="evidence" value="ECO:0007669"/>
    <property type="project" value="UniProtKB-EC"/>
</dbReference>
<dbReference type="GO" id="GO:0005524">
    <property type="term" value="F:ATP binding"/>
    <property type="evidence" value="ECO:0007669"/>
    <property type="project" value="UniProtKB-UniRule"/>
</dbReference>
<dbReference type="GO" id="GO:0003676">
    <property type="term" value="F:nucleic acid binding"/>
    <property type="evidence" value="ECO:0007669"/>
    <property type="project" value="InterPro"/>
</dbReference>
<dbReference type="GO" id="GO:0006422">
    <property type="term" value="P:aspartyl-tRNA aminoacylation"/>
    <property type="evidence" value="ECO:0007669"/>
    <property type="project" value="UniProtKB-UniRule"/>
</dbReference>
<dbReference type="CDD" id="cd00777">
    <property type="entry name" value="AspRS_core"/>
    <property type="match status" value="1"/>
</dbReference>
<dbReference type="CDD" id="cd04317">
    <property type="entry name" value="EcAspRS_like_N"/>
    <property type="match status" value="1"/>
</dbReference>
<dbReference type="Gene3D" id="3.30.930.10">
    <property type="entry name" value="Bira Bifunctional Protein, Domain 2"/>
    <property type="match status" value="1"/>
</dbReference>
<dbReference type="Gene3D" id="3.30.1360.30">
    <property type="entry name" value="GAD-like domain"/>
    <property type="match status" value="1"/>
</dbReference>
<dbReference type="Gene3D" id="2.40.50.140">
    <property type="entry name" value="Nucleic acid-binding proteins"/>
    <property type="match status" value="1"/>
</dbReference>
<dbReference type="HAMAP" id="MF_00044">
    <property type="entry name" value="Asp_tRNA_synth_type1"/>
    <property type="match status" value="1"/>
</dbReference>
<dbReference type="InterPro" id="IPR004364">
    <property type="entry name" value="Aa-tRNA-synt_II"/>
</dbReference>
<dbReference type="InterPro" id="IPR006195">
    <property type="entry name" value="aa-tRNA-synth_II"/>
</dbReference>
<dbReference type="InterPro" id="IPR045864">
    <property type="entry name" value="aa-tRNA-synth_II/BPL/LPL"/>
</dbReference>
<dbReference type="InterPro" id="IPR004524">
    <property type="entry name" value="Asp-tRNA-ligase_1"/>
</dbReference>
<dbReference type="InterPro" id="IPR047089">
    <property type="entry name" value="Asp-tRNA-ligase_1_N"/>
</dbReference>
<dbReference type="InterPro" id="IPR002312">
    <property type="entry name" value="Asp/Asn-tRNA-synth_IIb"/>
</dbReference>
<dbReference type="InterPro" id="IPR047090">
    <property type="entry name" value="AspRS_core"/>
</dbReference>
<dbReference type="InterPro" id="IPR004115">
    <property type="entry name" value="GAD-like_sf"/>
</dbReference>
<dbReference type="InterPro" id="IPR029351">
    <property type="entry name" value="GAD_dom"/>
</dbReference>
<dbReference type="InterPro" id="IPR012340">
    <property type="entry name" value="NA-bd_OB-fold"/>
</dbReference>
<dbReference type="InterPro" id="IPR004365">
    <property type="entry name" value="NA-bd_OB_tRNA"/>
</dbReference>
<dbReference type="NCBIfam" id="TIGR00459">
    <property type="entry name" value="aspS_bact"/>
    <property type="match status" value="1"/>
</dbReference>
<dbReference type="NCBIfam" id="NF001750">
    <property type="entry name" value="PRK00476.1"/>
    <property type="match status" value="1"/>
</dbReference>
<dbReference type="PANTHER" id="PTHR22594:SF5">
    <property type="entry name" value="ASPARTATE--TRNA LIGASE, MITOCHONDRIAL"/>
    <property type="match status" value="1"/>
</dbReference>
<dbReference type="PANTHER" id="PTHR22594">
    <property type="entry name" value="ASPARTYL/LYSYL-TRNA SYNTHETASE"/>
    <property type="match status" value="1"/>
</dbReference>
<dbReference type="Pfam" id="PF02938">
    <property type="entry name" value="GAD"/>
    <property type="match status" value="1"/>
</dbReference>
<dbReference type="Pfam" id="PF00152">
    <property type="entry name" value="tRNA-synt_2"/>
    <property type="match status" value="1"/>
</dbReference>
<dbReference type="Pfam" id="PF01336">
    <property type="entry name" value="tRNA_anti-codon"/>
    <property type="match status" value="1"/>
</dbReference>
<dbReference type="PRINTS" id="PR01042">
    <property type="entry name" value="TRNASYNTHASP"/>
</dbReference>
<dbReference type="SUPFAM" id="SSF55681">
    <property type="entry name" value="Class II aaRS and biotin synthetases"/>
    <property type="match status" value="1"/>
</dbReference>
<dbReference type="SUPFAM" id="SSF55261">
    <property type="entry name" value="GAD domain-like"/>
    <property type="match status" value="1"/>
</dbReference>
<dbReference type="SUPFAM" id="SSF50249">
    <property type="entry name" value="Nucleic acid-binding proteins"/>
    <property type="match status" value="1"/>
</dbReference>
<dbReference type="PROSITE" id="PS50862">
    <property type="entry name" value="AA_TRNA_LIGASE_II"/>
    <property type="match status" value="1"/>
</dbReference>
<feature type="chain" id="PRO_1000198975" description="Aspartate--tRNA(Asp/Asn) ligase">
    <location>
        <begin position="1"/>
        <end position="595"/>
    </location>
</feature>
<feature type="region of interest" description="Aspartate" evidence="1">
    <location>
        <begin position="202"/>
        <end position="205"/>
    </location>
</feature>
<feature type="binding site" evidence="1">
    <location>
        <position position="178"/>
    </location>
    <ligand>
        <name>L-aspartate</name>
        <dbReference type="ChEBI" id="CHEBI:29991"/>
    </ligand>
</feature>
<feature type="binding site" evidence="1">
    <location>
        <begin position="224"/>
        <end position="226"/>
    </location>
    <ligand>
        <name>ATP</name>
        <dbReference type="ChEBI" id="CHEBI:30616"/>
    </ligand>
</feature>
<feature type="binding site" evidence="1">
    <location>
        <position position="224"/>
    </location>
    <ligand>
        <name>L-aspartate</name>
        <dbReference type="ChEBI" id="CHEBI:29991"/>
    </ligand>
</feature>
<feature type="binding site" evidence="1">
    <location>
        <position position="233"/>
    </location>
    <ligand>
        <name>ATP</name>
        <dbReference type="ChEBI" id="CHEBI:30616"/>
    </ligand>
</feature>
<feature type="binding site" evidence="1">
    <location>
        <position position="458"/>
    </location>
    <ligand>
        <name>L-aspartate</name>
        <dbReference type="ChEBI" id="CHEBI:29991"/>
    </ligand>
</feature>
<feature type="binding site" evidence="1">
    <location>
        <position position="488"/>
    </location>
    <ligand>
        <name>ATP</name>
        <dbReference type="ChEBI" id="CHEBI:30616"/>
    </ligand>
</feature>
<feature type="binding site" evidence="1">
    <location>
        <position position="495"/>
    </location>
    <ligand>
        <name>L-aspartate</name>
        <dbReference type="ChEBI" id="CHEBI:29991"/>
    </ligand>
</feature>
<feature type="binding site" evidence="1">
    <location>
        <begin position="540"/>
        <end position="543"/>
    </location>
    <ligand>
        <name>ATP</name>
        <dbReference type="ChEBI" id="CHEBI:30616"/>
    </ligand>
</feature>
<feature type="site" description="Important for tRNA non-discrimination" evidence="1">
    <location>
        <position position="30"/>
    </location>
</feature>
<organism>
    <name type="scientific">Gloeothece citriformis (strain PCC 7424)</name>
    <name type="common">Cyanothece sp. (strain PCC 7424)</name>
    <dbReference type="NCBI Taxonomy" id="65393"/>
    <lineage>
        <taxon>Bacteria</taxon>
        <taxon>Bacillati</taxon>
        <taxon>Cyanobacteriota</taxon>
        <taxon>Cyanophyceae</taxon>
        <taxon>Oscillatoriophycideae</taxon>
        <taxon>Chroococcales</taxon>
        <taxon>Aphanothecaceae</taxon>
        <taxon>Gloeothece</taxon>
        <taxon>Gloeothece citriformis</taxon>
    </lineage>
</organism>
<sequence>MRTHYCGDLRASDIDKTVTLFGWVDRYRDHGGVIFADLRDRTGRVQIVSDPQRTPESYQAAANLRNEYVIKVEGRVSKRPKESLNPKIPTGEVEIYADSIEILNGVNKQLPFVISSEDAELVREEVRLKYRYLDLRRDRMRKNLQLRHQVVQAMRRYLEDQQNFMEVETPILTRSTPEGARDYLVPSRTNPGKWYALPQSPQLFKQLLMVSGVDRYYQIARCFRDEDNRADRQPEFTQLDMEMSFMSFDEILDLNEGLIAHVFKTVKNIDIPRPFPRLTYAEAMEKYGIDRPDTRFGLELVDVSEIVKDSGFKVFSGAVKSGGIVKVLPIPEATNIISNVQIKPGGELFKEATEAGAKGIAYIRIKDNNELDTIAAIKDNLTDEQKQELIEKTGAKPGHLLLFGAGDTDTVNKSLARLRLVVGEKLGLIDEDKINLLWVTDFPMFEWNAEEKRLEALHHPFTAPKPEDINDLPHARALAYDMIFNGIELGGGSLRIYQRDIQEKVFSTIGLSMEEAYNKFGFLLEAFEYGTPPHGGIAYGLDRFVMLLAKEESIRDVIAFPKTQQASCLLTEAPSTVEPKQLKELHIASTFKPKS</sequence>
<name>SYDND_GLOC7</name>